<dbReference type="EMBL" id="AL954747">
    <property type="protein sequence ID" value="CAD85398.1"/>
    <property type="molecule type" value="Genomic_DNA"/>
</dbReference>
<dbReference type="RefSeq" id="WP_011112055.1">
    <property type="nucleotide sequence ID" value="NC_004757.1"/>
</dbReference>
<dbReference type="SMR" id="Q82UJ7"/>
<dbReference type="STRING" id="228410.NE1487"/>
<dbReference type="GeneID" id="87104661"/>
<dbReference type="KEGG" id="neu:NE1487"/>
<dbReference type="eggNOG" id="COG2921">
    <property type="taxonomic scope" value="Bacteria"/>
</dbReference>
<dbReference type="HOGENOM" id="CLU_161438_1_2_4"/>
<dbReference type="OrthoDB" id="9793424at2"/>
<dbReference type="PhylomeDB" id="Q82UJ7"/>
<dbReference type="Proteomes" id="UP000001416">
    <property type="component" value="Chromosome"/>
</dbReference>
<dbReference type="GO" id="GO:0005829">
    <property type="term" value="C:cytosol"/>
    <property type="evidence" value="ECO:0007669"/>
    <property type="project" value="TreeGrafter"/>
</dbReference>
<dbReference type="Gene3D" id="3.30.70.260">
    <property type="match status" value="1"/>
</dbReference>
<dbReference type="HAMAP" id="MF_00659">
    <property type="entry name" value="UPF0250"/>
    <property type="match status" value="1"/>
</dbReference>
<dbReference type="InterPro" id="IPR007454">
    <property type="entry name" value="UPF0250_YbeD-like"/>
</dbReference>
<dbReference type="InterPro" id="IPR027471">
    <property type="entry name" value="YbeD-like_sf"/>
</dbReference>
<dbReference type="PANTHER" id="PTHR38036">
    <property type="entry name" value="UPF0250 PROTEIN YBED"/>
    <property type="match status" value="1"/>
</dbReference>
<dbReference type="PANTHER" id="PTHR38036:SF1">
    <property type="entry name" value="UPF0250 PROTEIN YBED"/>
    <property type="match status" value="1"/>
</dbReference>
<dbReference type="Pfam" id="PF04359">
    <property type="entry name" value="DUF493"/>
    <property type="match status" value="1"/>
</dbReference>
<dbReference type="SUPFAM" id="SSF117991">
    <property type="entry name" value="YbeD/HP0495-like"/>
    <property type="match status" value="1"/>
</dbReference>
<proteinExistence type="inferred from homology"/>
<keyword id="KW-1185">Reference proteome</keyword>
<reference key="1">
    <citation type="journal article" date="2003" name="J. Bacteriol.">
        <title>Complete genome sequence of the ammonia-oxidizing bacterium and obligate chemolithoautotroph Nitrosomonas europaea.</title>
        <authorList>
            <person name="Chain P."/>
            <person name="Lamerdin J.E."/>
            <person name="Larimer F.W."/>
            <person name="Regala W."/>
            <person name="Lao V."/>
            <person name="Land M.L."/>
            <person name="Hauser L."/>
            <person name="Hooper A.B."/>
            <person name="Klotz M.G."/>
            <person name="Norton J."/>
            <person name="Sayavedra-Soto L.A."/>
            <person name="Arciero D.M."/>
            <person name="Hommes N.G."/>
            <person name="Whittaker M.M."/>
            <person name="Arp D.J."/>
        </authorList>
    </citation>
    <scope>NUCLEOTIDE SEQUENCE [LARGE SCALE GENOMIC DNA]</scope>
    <source>
        <strain>ATCC 19718 / CIP 103999 / KCTC 2705 / NBRC 14298</strain>
    </source>
</reference>
<evidence type="ECO:0000255" key="1">
    <source>
        <dbReference type="HAMAP-Rule" id="MF_00659"/>
    </source>
</evidence>
<organism>
    <name type="scientific">Nitrosomonas europaea (strain ATCC 19718 / CIP 103999 / KCTC 2705 / NBRC 14298)</name>
    <dbReference type="NCBI Taxonomy" id="228410"/>
    <lineage>
        <taxon>Bacteria</taxon>
        <taxon>Pseudomonadati</taxon>
        <taxon>Pseudomonadota</taxon>
        <taxon>Betaproteobacteria</taxon>
        <taxon>Nitrosomonadales</taxon>
        <taxon>Nitrosomonadaceae</taxon>
        <taxon>Nitrosomonas</taxon>
    </lineage>
</organism>
<gene>
    <name type="ordered locus">NE1487</name>
</gene>
<accession>Q82UJ7</accession>
<feature type="chain" id="PRO_0000209303" description="UPF0250 protein NE1487">
    <location>
        <begin position="1"/>
        <end position="87"/>
    </location>
</feature>
<protein>
    <recommendedName>
        <fullName evidence="1">UPF0250 protein NE1487</fullName>
    </recommendedName>
</protein>
<comment type="similarity">
    <text evidence="1">Belongs to the UPF0250 family.</text>
</comment>
<name>Y1487_NITEU</name>
<sequence>MTEESLIEYPCDFPIKIMGKSQQGFTQSVLSIVKTYAPDFDDTTLEVRSSRNGAYLSLTCTIQATSRTQLDSLYQALHDHPMVTMLL</sequence>